<gene>
    <name evidence="1" type="primary">pnp</name>
    <name type="ordered locus">ABBFA_003175</name>
</gene>
<proteinExistence type="inferred from homology"/>
<accession>B7H0Z1</accession>
<name>PNP_ACIB3</name>
<feature type="chain" id="PRO_1000147871" description="Polyribonucleotide nucleotidyltransferase">
    <location>
        <begin position="1"/>
        <end position="697"/>
    </location>
</feature>
<feature type="domain" description="KH" evidence="1">
    <location>
        <begin position="555"/>
        <end position="614"/>
    </location>
</feature>
<feature type="domain" description="S1 motif" evidence="1">
    <location>
        <begin position="624"/>
        <end position="692"/>
    </location>
</feature>
<feature type="binding site" evidence="1">
    <location>
        <position position="488"/>
    </location>
    <ligand>
        <name>Mg(2+)</name>
        <dbReference type="ChEBI" id="CHEBI:18420"/>
    </ligand>
</feature>
<feature type="binding site" evidence="1">
    <location>
        <position position="494"/>
    </location>
    <ligand>
        <name>Mg(2+)</name>
        <dbReference type="ChEBI" id="CHEBI:18420"/>
    </ligand>
</feature>
<comment type="function">
    <text evidence="1">Involved in mRNA degradation. Catalyzes the phosphorolysis of single-stranded polyribonucleotides processively in the 3'- to 5'-direction.</text>
</comment>
<comment type="catalytic activity">
    <reaction evidence="1">
        <text>RNA(n+1) + phosphate = RNA(n) + a ribonucleoside 5'-diphosphate</text>
        <dbReference type="Rhea" id="RHEA:22096"/>
        <dbReference type="Rhea" id="RHEA-COMP:14527"/>
        <dbReference type="Rhea" id="RHEA-COMP:17342"/>
        <dbReference type="ChEBI" id="CHEBI:43474"/>
        <dbReference type="ChEBI" id="CHEBI:57930"/>
        <dbReference type="ChEBI" id="CHEBI:140395"/>
        <dbReference type="EC" id="2.7.7.8"/>
    </reaction>
</comment>
<comment type="cofactor">
    <cofactor evidence="1">
        <name>Mg(2+)</name>
        <dbReference type="ChEBI" id="CHEBI:18420"/>
    </cofactor>
</comment>
<comment type="subunit">
    <text evidence="1">Component of the RNA degradosome, which is a multiprotein complex involved in RNA processing and mRNA degradation.</text>
</comment>
<comment type="subcellular location">
    <subcellularLocation>
        <location evidence="1">Cytoplasm</location>
    </subcellularLocation>
</comment>
<comment type="similarity">
    <text evidence="1">Belongs to the polyribonucleotide nucleotidyltransferase family.</text>
</comment>
<dbReference type="EC" id="2.7.7.8" evidence="1"/>
<dbReference type="EMBL" id="CP001172">
    <property type="protein sequence ID" value="ACJ56155.1"/>
    <property type="molecule type" value="Genomic_DNA"/>
</dbReference>
<dbReference type="SMR" id="B7H0Z1"/>
<dbReference type="HOGENOM" id="CLU_004217_2_2_6"/>
<dbReference type="Proteomes" id="UP000006924">
    <property type="component" value="Chromosome"/>
</dbReference>
<dbReference type="GO" id="GO:0005829">
    <property type="term" value="C:cytosol"/>
    <property type="evidence" value="ECO:0007669"/>
    <property type="project" value="TreeGrafter"/>
</dbReference>
<dbReference type="GO" id="GO:0000175">
    <property type="term" value="F:3'-5'-RNA exonuclease activity"/>
    <property type="evidence" value="ECO:0007669"/>
    <property type="project" value="TreeGrafter"/>
</dbReference>
<dbReference type="GO" id="GO:0000287">
    <property type="term" value="F:magnesium ion binding"/>
    <property type="evidence" value="ECO:0007669"/>
    <property type="project" value="UniProtKB-UniRule"/>
</dbReference>
<dbReference type="GO" id="GO:0004654">
    <property type="term" value="F:polyribonucleotide nucleotidyltransferase activity"/>
    <property type="evidence" value="ECO:0007669"/>
    <property type="project" value="UniProtKB-UniRule"/>
</dbReference>
<dbReference type="GO" id="GO:0003723">
    <property type="term" value="F:RNA binding"/>
    <property type="evidence" value="ECO:0007669"/>
    <property type="project" value="UniProtKB-UniRule"/>
</dbReference>
<dbReference type="GO" id="GO:0006402">
    <property type="term" value="P:mRNA catabolic process"/>
    <property type="evidence" value="ECO:0007669"/>
    <property type="project" value="UniProtKB-UniRule"/>
</dbReference>
<dbReference type="GO" id="GO:0006396">
    <property type="term" value="P:RNA processing"/>
    <property type="evidence" value="ECO:0007669"/>
    <property type="project" value="InterPro"/>
</dbReference>
<dbReference type="CDD" id="cd02393">
    <property type="entry name" value="KH-I_PNPase"/>
    <property type="match status" value="1"/>
</dbReference>
<dbReference type="CDD" id="cd11363">
    <property type="entry name" value="RNase_PH_PNPase_1"/>
    <property type="match status" value="1"/>
</dbReference>
<dbReference type="CDD" id="cd11364">
    <property type="entry name" value="RNase_PH_PNPase_2"/>
    <property type="match status" value="1"/>
</dbReference>
<dbReference type="CDD" id="cd04472">
    <property type="entry name" value="S1_PNPase"/>
    <property type="match status" value="1"/>
</dbReference>
<dbReference type="FunFam" id="2.40.50.140:FF:000023">
    <property type="entry name" value="Polyribonucleotide nucleotidyltransferase"/>
    <property type="match status" value="1"/>
</dbReference>
<dbReference type="FunFam" id="3.30.1370.10:FF:000001">
    <property type="entry name" value="Polyribonucleotide nucleotidyltransferase"/>
    <property type="match status" value="1"/>
</dbReference>
<dbReference type="FunFam" id="3.30.230.70:FF:000001">
    <property type="entry name" value="Polyribonucleotide nucleotidyltransferase"/>
    <property type="match status" value="1"/>
</dbReference>
<dbReference type="FunFam" id="3.30.230.70:FF:000002">
    <property type="entry name" value="Polyribonucleotide nucleotidyltransferase"/>
    <property type="match status" value="1"/>
</dbReference>
<dbReference type="Gene3D" id="3.30.230.70">
    <property type="entry name" value="GHMP Kinase, N-terminal domain"/>
    <property type="match status" value="2"/>
</dbReference>
<dbReference type="Gene3D" id="3.30.1370.10">
    <property type="entry name" value="K Homology domain, type 1"/>
    <property type="match status" value="1"/>
</dbReference>
<dbReference type="Gene3D" id="2.40.50.140">
    <property type="entry name" value="Nucleic acid-binding proteins"/>
    <property type="match status" value="1"/>
</dbReference>
<dbReference type="HAMAP" id="MF_01595">
    <property type="entry name" value="PNPase"/>
    <property type="match status" value="1"/>
</dbReference>
<dbReference type="InterPro" id="IPR001247">
    <property type="entry name" value="ExoRNase_PH_dom1"/>
</dbReference>
<dbReference type="InterPro" id="IPR015847">
    <property type="entry name" value="ExoRNase_PH_dom2"/>
</dbReference>
<dbReference type="InterPro" id="IPR036345">
    <property type="entry name" value="ExoRNase_PH_dom2_sf"/>
</dbReference>
<dbReference type="InterPro" id="IPR004087">
    <property type="entry name" value="KH_dom"/>
</dbReference>
<dbReference type="InterPro" id="IPR004088">
    <property type="entry name" value="KH_dom_type_1"/>
</dbReference>
<dbReference type="InterPro" id="IPR036612">
    <property type="entry name" value="KH_dom_type_1_sf"/>
</dbReference>
<dbReference type="InterPro" id="IPR012340">
    <property type="entry name" value="NA-bd_OB-fold"/>
</dbReference>
<dbReference type="InterPro" id="IPR012162">
    <property type="entry name" value="PNPase"/>
</dbReference>
<dbReference type="InterPro" id="IPR027408">
    <property type="entry name" value="PNPase/RNase_PH_dom_sf"/>
</dbReference>
<dbReference type="InterPro" id="IPR015848">
    <property type="entry name" value="PNPase_PH_RNA-bd_bac/org-type"/>
</dbReference>
<dbReference type="InterPro" id="IPR036456">
    <property type="entry name" value="PNPase_PH_RNA-bd_sf"/>
</dbReference>
<dbReference type="InterPro" id="IPR020568">
    <property type="entry name" value="Ribosomal_Su5_D2-typ_SF"/>
</dbReference>
<dbReference type="InterPro" id="IPR003029">
    <property type="entry name" value="S1_domain"/>
</dbReference>
<dbReference type="NCBIfam" id="TIGR03591">
    <property type="entry name" value="polynuc_phos"/>
    <property type="match status" value="1"/>
</dbReference>
<dbReference type="NCBIfam" id="NF008805">
    <property type="entry name" value="PRK11824.1"/>
    <property type="match status" value="1"/>
</dbReference>
<dbReference type="PANTHER" id="PTHR11252">
    <property type="entry name" value="POLYRIBONUCLEOTIDE NUCLEOTIDYLTRANSFERASE"/>
    <property type="match status" value="1"/>
</dbReference>
<dbReference type="PANTHER" id="PTHR11252:SF0">
    <property type="entry name" value="POLYRIBONUCLEOTIDE NUCLEOTIDYLTRANSFERASE 1, MITOCHONDRIAL"/>
    <property type="match status" value="1"/>
</dbReference>
<dbReference type="Pfam" id="PF00013">
    <property type="entry name" value="KH_1"/>
    <property type="match status" value="1"/>
</dbReference>
<dbReference type="Pfam" id="PF03726">
    <property type="entry name" value="PNPase"/>
    <property type="match status" value="1"/>
</dbReference>
<dbReference type="Pfam" id="PF01138">
    <property type="entry name" value="RNase_PH"/>
    <property type="match status" value="2"/>
</dbReference>
<dbReference type="Pfam" id="PF03725">
    <property type="entry name" value="RNase_PH_C"/>
    <property type="match status" value="2"/>
</dbReference>
<dbReference type="Pfam" id="PF00575">
    <property type="entry name" value="S1"/>
    <property type="match status" value="1"/>
</dbReference>
<dbReference type="PIRSF" id="PIRSF005499">
    <property type="entry name" value="PNPase"/>
    <property type="match status" value="1"/>
</dbReference>
<dbReference type="SMART" id="SM00322">
    <property type="entry name" value="KH"/>
    <property type="match status" value="1"/>
</dbReference>
<dbReference type="SMART" id="SM00316">
    <property type="entry name" value="S1"/>
    <property type="match status" value="1"/>
</dbReference>
<dbReference type="SUPFAM" id="SSF54791">
    <property type="entry name" value="Eukaryotic type KH-domain (KH-domain type I)"/>
    <property type="match status" value="1"/>
</dbReference>
<dbReference type="SUPFAM" id="SSF50249">
    <property type="entry name" value="Nucleic acid-binding proteins"/>
    <property type="match status" value="1"/>
</dbReference>
<dbReference type="SUPFAM" id="SSF46915">
    <property type="entry name" value="Polynucleotide phosphorylase/guanosine pentaphosphate synthase (PNPase/GPSI), domain 3"/>
    <property type="match status" value="1"/>
</dbReference>
<dbReference type="SUPFAM" id="SSF55666">
    <property type="entry name" value="Ribonuclease PH domain 2-like"/>
    <property type="match status" value="2"/>
</dbReference>
<dbReference type="SUPFAM" id="SSF54211">
    <property type="entry name" value="Ribosomal protein S5 domain 2-like"/>
    <property type="match status" value="2"/>
</dbReference>
<dbReference type="PROSITE" id="PS50084">
    <property type="entry name" value="KH_TYPE_1"/>
    <property type="match status" value="1"/>
</dbReference>
<dbReference type="PROSITE" id="PS50126">
    <property type="entry name" value="S1"/>
    <property type="match status" value="1"/>
</dbReference>
<organism>
    <name type="scientific">Acinetobacter baumannii (strain AB307-0294)</name>
    <dbReference type="NCBI Taxonomy" id="557600"/>
    <lineage>
        <taxon>Bacteria</taxon>
        <taxon>Pseudomonadati</taxon>
        <taxon>Pseudomonadota</taxon>
        <taxon>Gammaproteobacteria</taxon>
        <taxon>Moraxellales</taxon>
        <taxon>Moraxellaceae</taxon>
        <taxon>Acinetobacter</taxon>
        <taxon>Acinetobacter calcoaceticus/baumannii complex</taxon>
    </lineage>
</organism>
<reference key="1">
    <citation type="journal article" date="2008" name="J. Bacteriol.">
        <title>Comparative genome sequence analysis of multidrug-resistant Acinetobacter baumannii.</title>
        <authorList>
            <person name="Adams M.D."/>
            <person name="Goglin K."/>
            <person name="Molyneaux N."/>
            <person name="Hujer K.M."/>
            <person name="Lavender H."/>
            <person name="Jamison J.J."/>
            <person name="MacDonald I.J."/>
            <person name="Martin K.M."/>
            <person name="Russo T."/>
            <person name="Campagnari A.A."/>
            <person name="Hujer A.M."/>
            <person name="Bonomo R.A."/>
            <person name="Gill S.R."/>
        </authorList>
    </citation>
    <scope>NUCLEOTIDE SEQUENCE [LARGE SCALE GENOMIC DNA]</scope>
    <source>
        <strain>AB307-0294</strain>
    </source>
</reference>
<evidence type="ECO:0000255" key="1">
    <source>
        <dbReference type="HAMAP-Rule" id="MF_01595"/>
    </source>
</evidence>
<protein>
    <recommendedName>
        <fullName evidence="1">Polyribonucleotide nucleotidyltransferase</fullName>
        <ecNumber evidence="1">2.7.7.8</ecNumber>
    </recommendedName>
    <alternativeName>
        <fullName evidence="1">Polynucleotide phosphorylase</fullName>
        <shortName evidence="1">PNPase</shortName>
    </alternativeName>
</protein>
<sequence length="697" mass="75244">MSMFNIVRKEFQFGQHQVVLETGRVARQANTVLITMGGVTVLVAVVAAPTAKAGQDFFPLTVNYQEKQYAAGRIPGGYGKREGRASEAETLISRLIDRPIRPLFPEGYYNEIQVTATVVSSDKTMEADIAAMLGTSAALAIAGTPFRGPIGAARVGLINGEYVLNPNFEQMAQSDLDLVVAGTESAVLMVESEAKELSEDQMLGAVLFGHDEMQIAIQAINEFAAAAGAKPSDWVAPAHNEELRAKLKEAFEAKISEAYTIAVKQDRYAALDALHAEAVAQFVPEEDVDGIADEVDYLFEDLKYRTVRDNILSGKPRIDGRDTKTVRALDVQVGVLERAHGSALFTRGETQALVTTTLGNTRDALMVDTLAGTKTDNFMLHYNFPAYSVGETGRESGPKRREIGHGRLARRGVQAVLPAADRFPYVIRIVSDITESNGSSSMASVCGASLSLMDAGVPLKAPVAGIAMGLVKEGERFAVLSDILGDEDHLGDMDFKVAGSANGITALQMDIKIEGITEEIMEVALNQAFAGRMHILNEMNKVISRARPEISMHAPTFEVITINPDKIRDVIGKGGATIRQITEETKAAIDIEDNGTVRVFGETKAAAKAAIAKIQAITAEVEPGKIYDGKVIRIVEFGAFVNIMPGTDGLLHISQISNERIANVTDVLKEGQEVKVQVQDVDNRGRIKLTMKDIEQA</sequence>
<keyword id="KW-0963">Cytoplasm</keyword>
<keyword id="KW-0460">Magnesium</keyword>
<keyword id="KW-0479">Metal-binding</keyword>
<keyword id="KW-0548">Nucleotidyltransferase</keyword>
<keyword id="KW-0694">RNA-binding</keyword>
<keyword id="KW-0808">Transferase</keyword>